<gene>
    <name type="primary">ftsK</name>
    <name type="ordered locus">SPy_0458</name>
    <name type="ordered locus">M5005_Spy0372</name>
</gene>
<accession>Q9A155</accession>
<accession>Q490H8</accession>
<protein>
    <recommendedName>
        <fullName>DNA translocase FtsK</fullName>
    </recommendedName>
</protein>
<feature type="chain" id="PRO_0000098308" description="DNA translocase FtsK">
    <location>
        <begin position="1"/>
        <end position="801"/>
    </location>
</feature>
<feature type="transmembrane region" description="Helical" evidence="2">
    <location>
        <begin position="31"/>
        <end position="53"/>
    </location>
</feature>
<feature type="transmembrane region" description="Helical" evidence="2">
    <location>
        <begin position="58"/>
        <end position="80"/>
    </location>
</feature>
<feature type="transmembrane region" description="Helical" evidence="2">
    <location>
        <begin position="89"/>
        <end position="111"/>
    </location>
</feature>
<feature type="transmembrane region" description="Helical" evidence="2">
    <location>
        <begin position="131"/>
        <end position="150"/>
    </location>
</feature>
<feature type="transmembrane region" description="Helical" evidence="2">
    <location>
        <begin position="155"/>
        <end position="177"/>
    </location>
</feature>
<feature type="topological domain" description="Cytoplasmic" evidence="2">
    <location>
        <begin position="178"/>
        <end position="801"/>
    </location>
</feature>
<feature type="domain" description="FtsK" evidence="3">
    <location>
        <begin position="464"/>
        <end position="660"/>
    </location>
</feature>
<feature type="region of interest" description="Disordered" evidence="4">
    <location>
        <begin position="715"/>
        <end position="739"/>
    </location>
</feature>
<feature type="compositionally biased region" description="Acidic residues" evidence="4">
    <location>
        <begin position="715"/>
        <end position="726"/>
    </location>
</feature>
<feature type="binding site" evidence="3">
    <location>
        <begin position="484"/>
        <end position="489"/>
    </location>
    <ligand>
        <name>ATP</name>
        <dbReference type="ChEBI" id="CHEBI:30616"/>
    </ligand>
</feature>
<feature type="sequence conflict" description="In Ref. 2; AAZ50990." evidence="5" ref="2">
    <original>T</original>
    <variation>A</variation>
    <location>
        <position position="711"/>
    </location>
</feature>
<sequence length="801" mass="89328">MVKRNQRKKSAPKKRLTKAEVEKQRAIKRMILSVLMALLLIFAMLRLGVFGVTTYNMIRFLVGSLAYPFMFAWLIYLFCFKWLRQKDGMIAGVVIAFLGLLVEWHAFLFAMPRMLDQDIFLGTARLITRDLLALRVTEFVGGGMLGALLYKPIAFLFSNIGSYFIGFLFILLGLFLMTPWDIYDVSHFVKEAVDKLAVAYQENKEKRFIKREEHRLQAEKEALEKQAQEEEKRLAELTVDPETGEIVEDSQSQVSYDLAEDMTKEPEILAYDSHLKDDETSLFDQEDLAYAHEEIGAYDSLSALASSEDEMDMDEPVEVDFTPKTHLLYKLPTIDLFAPDKPKNQSKEKNLVRKNIKVLEDTFQSFGIDVKVERAEIGPSVTKYEIKPAVGVRVNRISNLADDLALALAAKDVRIEAPIPGKSLIGIEVPNSEIATVSFRELWEQSDANPENLLEVPLGKAVNGNARSFNLARMPHLLVAGSTGSGKSVAVNGIISSILMKARPDQVKFMMIDPKMVELSVYNDIPHLLIPVVTNPRKASKALQKVVDEMENRYELFSKIGVRNIAGYNTKVEEFNASSEQKQIPLPLIVVIVDELADLMMVASKEVEDAIIRLGQKARAAGIHMILATQRPSVDVISGLIKANVPSRMAFAVSSGTDSRTILDENGAEKLLGRGDMLFKPIDENHPVRLQGSFISDDDVERIVNFIKDQTEADYDDAFDPGEVSDNDPGFSGNGGAAEGDPLFEEAKALVLETQKASASMIQRRLSVGFNRATRLMDELEEAGVIGPAEGTKPRKVLQTN</sequence>
<comment type="function">
    <text evidence="1">Essential cell division protein that coordinates cell division and chromosome segregation. The N-terminus is involved in assembly of the cell-division machinery. The C-terminus functions as a DNA motor that moves dsDNA in an ATP-dependent manner towards the difSL recombination site, which is located within the replication terminus region. Required for activation of the XerS recombinase, allowing activation of chromosome unlinking by recombination (By similarity).</text>
</comment>
<comment type="subunit">
    <text evidence="1">Homohexamer. Forms a ring that surrounds DNA (By similarity).</text>
</comment>
<comment type="subcellular location">
    <subcellularLocation>
        <location evidence="1">Cell membrane</location>
        <topology evidence="1">Multi-pass membrane protein</topology>
    </subcellularLocation>
    <text evidence="1">Located at the septum.</text>
</comment>
<comment type="domain">
    <text evidence="1">Consists of an N-terminal domain, which is sufficient for the localization to the septal ring and is required for cell division, followed by a linker domain, and a C-terminal domain, which forms the translocation motor involved in chromosome segregation. The C-terminal domain can be further subdivided into alpha, beta and gamma subdomains. The alpha and beta subdomains form the DNA pump, and the gamma subdomain is a regulatory subdomain (By similarity).</text>
</comment>
<comment type="similarity">
    <text evidence="5">Belongs to the FtsK/SpoIIIE/SftA family.</text>
</comment>
<organism>
    <name type="scientific">Streptococcus pyogenes serotype M1</name>
    <dbReference type="NCBI Taxonomy" id="301447"/>
    <lineage>
        <taxon>Bacteria</taxon>
        <taxon>Bacillati</taxon>
        <taxon>Bacillota</taxon>
        <taxon>Bacilli</taxon>
        <taxon>Lactobacillales</taxon>
        <taxon>Streptococcaceae</taxon>
        <taxon>Streptococcus</taxon>
    </lineage>
</organism>
<dbReference type="EMBL" id="AE004092">
    <property type="protein sequence ID" value="AAK33472.1"/>
    <property type="molecule type" value="Genomic_DNA"/>
</dbReference>
<dbReference type="EMBL" id="CP000017">
    <property type="protein sequence ID" value="AAZ50990.1"/>
    <property type="molecule type" value="Genomic_DNA"/>
</dbReference>
<dbReference type="RefSeq" id="NP_268751.1">
    <property type="nucleotide sequence ID" value="NC_002737.2"/>
</dbReference>
<dbReference type="SMR" id="Q9A155"/>
<dbReference type="PaxDb" id="1314-HKU360_00404"/>
<dbReference type="KEGG" id="spy:SPy_0458"/>
<dbReference type="KEGG" id="spz:M5005_Spy0372"/>
<dbReference type="PATRIC" id="fig|160490.10.peg.386"/>
<dbReference type="HOGENOM" id="CLU_001981_9_6_9"/>
<dbReference type="OMA" id="WEQSNTS"/>
<dbReference type="Proteomes" id="UP000000750">
    <property type="component" value="Chromosome"/>
</dbReference>
<dbReference type="GO" id="GO:0005886">
    <property type="term" value="C:plasma membrane"/>
    <property type="evidence" value="ECO:0007669"/>
    <property type="project" value="UniProtKB-SubCell"/>
</dbReference>
<dbReference type="GO" id="GO:0005524">
    <property type="term" value="F:ATP binding"/>
    <property type="evidence" value="ECO:0007669"/>
    <property type="project" value="UniProtKB-KW"/>
</dbReference>
<dbReference type="GO" id="GO:0016887">
    <property type="term" value="F:ATP hydrolysis activity"/>
    <property type="evidence" value="ECO:0007669"/>
    <property type="project" value="InterPro"/>
</dbReference>
<dbReference type="GO" id="GO:0003677">
    <property type="term" value="F:DNA binding"/>
    <property type="evidence" value="ECO:0007669"/>
    <property type="project" value="UniProtKB-KW"/>
</dbReference>
<dbReference type="GO" id="GO:0051301">
    <property type="term" value="P:cell division"/>
    <property type="evidence" value="ECO:0007669"/>
    <property type="project" value="UniProtKB-KW"/>
</dbReference>
<dbReference type="GO" id="GO:0007059">
    <property type="term" value="P:chromosome segregation"/>
    <property type="evidence" value="ECO:0007669"/>
    <property type="project" value="UniProtKB-KW"/>
</dbReference>
<dbReference type="CDD" id="cd01127">
    <property type="entry name" value="TrwB_TraG_TraD_VirD4"/>
    <property type="match status" value="1"/>
</dbReference>
<dbReference type="Gene3D" id="3.30.980.40">
    <property type="match status" value="1"/>
</dbReference>
<dbReference type="Gene3D" id="3.40.50.300">
    <property type="entry name" value="P-loop containing nucleotide triphosphate hydrolases"/>
    <property type="match status" value="1"/>
</dbReference>
<dbReference type="Gene3D" id="1.10.10.10">
    <property type="entry name" value="Winged helix-like DNA-binding domain superfamily/Winged helix DNA-binding domain"/>
    <property type="match status" value="1"/>
</dbReference>
<dbReference type="InterPro" id="IPR003593">
    <property type="entry name" value="AAA+_ATPase"/>
</dbReference>
<dbReference type="InterPro" id="IPR050206">
    <property type="entry name" value="FtsK/SpoIIIE/SftA"/>
</dbReference>
<dbReference type="InterPro" id="IPR041027">
    <property type="entry name" value="FtsK_alpha"/>
</dbReference>
<dbReference type="InterPro" id="IPR002543">
    <property type="entry name" value="FtsK_dom"/>
</dbReference>
<dbReference type="InterPro" id="IPR018541">
    <property type="entry name" value="Ftsk_gamma"/>
</dbReference>
<dbReference type="InterPro" id="IPR027417">
    <property type="entry name" value="P-loop_NTPase"/>
</dbReference>
<dbReference type="InterPro" id="IPR036388">
    <property type="entry name" value="WH-like_DNA-bd_sf"/>
</dbReference>
<dbReference type="InterPro" id="IPR036390">
    <property type="entry name" value="WH_DNA-bd_sf"/>
</dbReference>
<dbReference type="PANTHER" id="PTHR22683:SF41">
    <property type="entry name" value="DNA TRANSLOCASE FTSK"/>
    <property type="match status" value="1"/>
</dbReference>
<dbReference type="PANTHER" id="PTHR22683">
    <property type="entry name" value="SPORULATION PROTEIN RELATED"/>
    <property type="match status" value="1"/>
</dbReference>
<dbReference type="Pfam" id="PF17854">
    <property type="entry name" value="FtsK_alpha"/>
    <property type="match status" value="1"/>
</dbReference>
<dbReference type="Pfam" id="PF09397">
    <property type="entry name" value="FtsK_gamma"/>
    <property type="match status" value="1"/>
</dbReference>
<dbReference type="Pfam" id="PF01580">
    <property type="entry name" value="FtsK_SpoIIIE"/>
    <property type="match status" value="1"/>
</dbReference>
<dbReference type="SMART" id="SM00382">
    <property type="entry name" value="AAA"/>
    <property type="match status" value="1"/>
</dbReference>
<dbReference type="SMART" id="SM00843">
    <property type="entry name" value="Ftsk_gamma"/>
    <property type="match status" value="1"/>
</dbReference>
<dbReference type="SUPFAM" id="SSF52540">
    <property type="entry name" value="P-loop containing nucleoside triphosphate hydrolases"/>
    <property type="match status" value="1"/>
</dbReference>
<dbReference type="SUPFAM" id="SSF46785">
    <property type="entry name" value="Winged helix' DNA-binding domain"/>
    <property type="match status" value="1"/>
</dbReference>
<dbReference type="PROSITE" id="PS50901">
    <property type="entry name" value="FTSK"/>
    <property type="match status" value="1"/>
</dbReference>
<keyword id="KW-0067">ATP-binding</keyword>
<keyword id="KW-0131">Cell cycle</keyword>
<keyword id="KW-0132">Cell division</keyword>
<keyword id="KW-1003">Cell membrane</keyword>
<keyword id="KW-0159">Chromosome partition</keyword>
<keyword id="KW-0238">DNA-binding</keyword>
<keyword id="KW-0472">Membrane</keyword>
<keyword id="KW-0547">Nucleotide-binding</keyword>
<keyword id="KW-1185">Reference proteome</keyword>
<keyword id="KW-0812">Transmembrane</keyword>
<keyword id="KW-1133">Transmembrane helix</keyword>
<reference key="1">
    <citation type="journal article" date="2001" name="Proc. Natl. Acad. Sci. U.S.A.">
        <title>Complete genome sequence of an M1 strain of Streptococcus pyogenes.</title>
        <authorList>
            <person name="Ferretti J.J."/>
            <person name="McShan W.M."/>
            <person name="Ajdic D.J."/>
            <person name="Savic D.J."/>
            <person name="Savic G."/>
            <person name="Lyon K."/>
            <person name="Primeaux C."/>
            <person name="Sezate S."/>
            <person name="Suvorov A.N."/>
            <person name="Kenton S."/>
            <person name="Lai H.S."/>
            <person name="Lin S.P."/>
            <person name="Qian Y."/>
            <person name="Jia H.G."/>
            <person name="Najar F.Z."/>
            <person name="Ren Q."/>
            <person name="Zhu H."/>
            <person name="Song L."/>
            <person name="White J."/>
            <person name="Yuan X."/>
            <person name="Clifton S.W."/>
            <person name="Roe B.A."/>
            <person name="McLaughlin R.E."/>
        </authorList>
    </citation>
    <scope>NUCLEOTIDE SEQUENCE [LARGE SCALE GENOMIC DNA]</scope>
    <source>
        <strain>ATCC 700294 / SF370 / Serotype M1</strain>
    </source>
</reference>
<reference key="2">
    <citation type="journal article" date="2005" name="J. Infect. Dis.">
        <title>Evolutionary origin and emergence of a highly successful clone of serotype M1 group A Streptococcus involved multiple horizontal gene transfer events.</title>
        <authorList>
            <person name="Sumby P."/>
            <person name="Porcella S.F."/>
            <person name="Madrigal A.G."/>
            <person name="Barbian K.D."/>
            <person name="Virtaneva K."/>
            <person name="Ricklefs S.M."/>
            <person name="Sturdevant D.E."/>
            <person name="Graham M.R."/>
            <person name="Vuopio-Varkila J."/>
            <person name="Hoe N.P."/>
            <person name="Musser J.M."/>
        </authorList>
    </citation>
    <scope>NUCLEOTIDE SEQUENCE [LARGE SCALE GENOMIC DNA]</scope>
    <source>
        <strain>ATCC BAA-947 / MGAS5005 / Serotype M1</strain>
    </source>
</reference>
<proteinExistence type="inferred from homology"/>
<name>FTSK_STRP1</name>
<evidence type="ECO:0000250" key="1"/>
<evidence type="ECO:0000255" key="2"/>
<evidence type="ECO:0000255" key="3">
    <source>
        <dbReference type="PROSITE-ProRule" id="PRU00289"/>
    </source>
</evidence>
<evidence type="ECO:0000256" key="4">
    <source>
        <dbReference type="SAM" id="MobiDB-lite"/>
    </source>
</evidence>
<evidence type="ECO:0000305" key="5"/>